<reference key="1">
    <citation type="journal article" date="1999" name="J. Biol. Chem.">
        <title>PARP-2, a novel mammalian DNA damage-dependent poly(ADP-ribose) polymerase.</title>
        <authorList>
            <person name="Ame J.-C."/>
            <person name="Rolli V."/>
            <person name="Schreiber V."/>
            <person name="Niedergang C."/>
            <person name="Apiou F."/>
            <person name="Decker P."/>
            <person name="Muller S."/>
            <person name="Hoeger T."/>
            <person name="Menissier-de Murcia J."/>
            <person name="de Murcia G.M."/>
        </authorList>
    </citation>
    <scope>NUCLEOTIDE SEQUENCE [MRNA]</scope>
    <scope>FUNCTION</scope>
    <scope>SUBCELLULAR LOCATION</scope>
    <scope>INDUCTION</scope>
    <source>
        <tissue>Embryo</tissue>
    </source>
</reference>
<reference key="2">
    <citation type="journal article" date="2001" name="J. Biol. Chem.">
        <title>A bidirectional promoter connects the poly(ADP-ribose) polymerase 2 (PARP-2) gene to the gene for RNase P RNA. Structure and expression of the mouse PARP-2 gene.</title>
        <authorList>
            <person name="Ame J.-C."/>
            <person name="Schreiber V."/>
            <person name="Fraulob V."/>
            <person name="Dolle P."/>
            <person name="de Murcia G.M."/>
            <person name="Niedergang C.P."/>
        </authorList>
    </citation>
    <scope>NUCLEOTIDE SEQUENCE [GENOMIC DNA]</scope>
    <scope>TISSUE SPECIFICITY</scope>
    <scope>DEVELOPMENTAL STAGE</scope>
    <source>
        <strain>129/Sv</strain>
    </source>
</reference>
<reference key="3">
    <citation type="journal article" date="2004" name="Genome Res.">
        <title>The status, quality, and expansion of the NIH full-length cDNA project: the Mammalian Gene Collection (MGC).</title>
        <authorList>
            <consortium name="The MGC Project Team"/>
        </authorList>
    </citation>
    <scope>NUCLEOTIDE SEQUENCE [LARGE SCALE MRNA]</scope>
    <source>
        <tissue>Embryo</tissue>
    </source>
</reference>
<reference key="4">
    <citation type="journal article" date="1999" name="FEBS Lett.">
        <title>pADPRT-2: a novel mammalian polymerizing(ADP-ribosyl)transferase gene related to truncated pADPRT homologues in plants and Caenorhabditis elegans.</title>
        <authorList>
            <person name="Berghammer H."/>
            <person name="Ebner M."/>
            <person name="Marksteiner R."/>
            <person name="Auer B."/>
        </authorList>
    </citation>
    <scope>NUCLEOTIDE SEQUENCE [MRNA] OF 9-559</scope>
    <source>
        <strain>C57BL/6 X 129/Sv</strain>
    </source>
</reference>
<reference key="5">
    <citation type="journal article" date="2002" name="J. Biol. Chem.">
        <title>Poly(ADP-ribose) polymerase-2 (PARP-2) is required for efficient base excision DNA repair in association with PARP-1 and XRCC1.</title>
        <authorList>
            <person name="Schreiber V."/>
            <person name="Ame J.-C."/>
            <person name="Dolle P."/>
            <person name="Schultz I."/>
            <person name="Rinaldi B."/>
            <person name="Fraulob V."/>
            <person name="Menissier-de Murcia J."/>
            <person name="de Murcia G.M."/>
        </authorList>
    </citation>
    <scope>INTERACTION WITH PARP1; XRCC1; POLB AND LRIG3</scope>
    <scope>TISSUE SPECIFICITY</scope>
    <scope>DEVELOPMENTAL STAGE</scope>
    <scope>POLY-ADP-RIBOSYLATION</scope>
</reference>
<reference key="6">
    <citation type="journal article" date="2002" name="J. Biol. Chem.">
        <title>Active caspase-8 translocates into the nucleus of apoptotic cells to inactivate poly(ADP-ribose) polymerase-2.</title>
        <authorList>
            <person name="Benchoua A."/>
            <person name="Couriaud C."/>
            <person name="Guegan C."/>
            <person name="Tartier L."/>
            <person name="Couvert P."/>
            <person name="Friocourt G."/>
            <person name="Chelly J."/>
            <person name="Menissier-de Murcia J."/>
            <person name="Onteniente B."/>
        </authorList>
    </citation>
    <scope>FUNCTION</scope>
    <scope>SUBCELLULAR LOCATION</scope>
    <scope>CATALYTIC ACTIVITY</scope>
    <scope>MUTAGENESIS OF ASP-187</scope>
</reference>
<reference key="7">
    <citation type="journal article" date="2003" name="EMBO J.">
        <title>Functional interaction between PARP-1 and PARP-2 in chromosome stability and embryonic development in mouse.</title>
        <authorList>
            <person name="Menissier de Murcia J."/>
            <person name="Ricoul M."/>
            <person name="Tartier L."/>
            <person name="Niedergang C."/>
            <person name="Huber A."/>
            <person name="Dantzer F."/>
            <person name="Schreiber V."/>
            <person name="Ame J.C."/>
            <person name="Dierich A."/>
            <person name="LeMeur M."/>
            <person name="Sabatier L."/>
            <person name="Chambon P."/>
            <person name="de Murcia G."/>
        </authorList>
    </citation>
    <scope>DISRUPTION PHENOTYPE</scope>
</reference>
<reference key="8">
    <citation type="journal article" date="2008" name="Int. J. Biochem. Cell Biol.">
        <title>Identification of lysines 36 and 37 of PARP-2 as targets for acetylation and auto-ADP-ribosylation.</title>
        <authorList>
            <person name="Haenni S.S."/>
            <person name="Hassa P.O."/>
            <person name="Altmeyer M."/>
            <person name="Fey M."/>
            <person name="Imhof R."/>
            <person name="Hottiger M.O."/>
        </authorList>
    </citation>
    <scope>ACETYLATION AT LYS-36 AND LYS-37</scope>
    <scope>ADP-RIBOSYLATION AT LYS-36 AND LYS-37</scope>
    <scope>MUTAGENESIS OF LYS-36 AND LYS-37</scope>
</reference>
<reference key="9">
    <citation type="journal article" date="2021" name="Proc. Natl. Acad. Sci. U.S.A.">
        <title>Deficiency of PARP-1 and PARP-2 in the mouse uterus results in decidualization failure and pregnancy loss.</title>
        <authorList>
            <person name="Kelleher A.M."/>
            <person name="Setlem R."/>
            <person name="Dantzer F."/>
            <person name="DeMayo F.J."/>
            <person name="Lydon J.P."/>
            <person name="Kraus W.L."/>
        </authorList>
    </citation>
    <scope>DISRUPTION PHENOTYPE</scope>
</reference>
<reference evidence="15" key="10">
    <citation type="journal article" date="2004" name="Nucleic Acids Res.">
        <title>Crystal structure of the catalytic fragment of murine poly(ADP-ribose) polymerase-2.</title>
        <authorList>
            <person name="Oliver A.W."/>
            <person name="Ame J.C."/>
            <person name="Roe S.M."/>
            <person name="Good V."/>
            <person name="de Murcia G."/>
            <person name="Pearl L.H."/>
        </authorList>
    </citation>
    <scope>X-RAY CRYSTALLOGRAPHY (2.80 ANGSTROMS) OF 207-557</scope>
</reference>
<dbReference type="EC" id="2.4.2.30" evidence="9"/>
<dbReference type="EC" id="2.4.2.-" evidence="1"/>
<dbReference type="EMBL" id="AJ007780">
    <property type="protein sequence ID" value="CAA07679.1"/>
    <property type="molecule type" value="mRNA"/>
</dbReference>
<dbReference type="EMBL" id="AF191547">
    <property type="protein sequence ID" value="AAK13253.1"/>
    <property type="molecule type" value="Genomic_DNA"/>
</dbReference>
<dbReference type="EMBL" id="BC062150">
    <property type="protein sequence ID" value="AAH62150.1"/>
    <property type="molecule type" value="mRNA"/>
</dbReference>
<dbReference type="EMBL" id="AF072521">
    <property type="protein sequence ID" value="AAC25415.1"/>
    <property type="status" value="ALT_INIT"/>
    <property type="molecule type" value="mRNA"/>
</dbReference>
<dbReference type="CCDS" id="CCDS27025.1"/>
<dbReference type="RefSeq" id="NP_033762.1">
    <property type="nucleotide sequence ID" value="NM_009632.4"/>
</dbReference>
<dbReference type="RefSeq" id="XP_006518505.1">
    <property type="nucleotide sequence ID" value="XM_006518442.3"/>
</dbReference>
<dbReference type="PDB" id="1GS0">
    <property type="method" value="X-ray"/>
    <property type="resolution" value="2.80 A"/>
    <property type="chains" value="A/B=207-557"/>
</dbReference>
<dbReference type="PDBsum" id="1GS0"/>
<dbReference type="SMR" id="O88554"/>
<dbReference type="BioGRID" id="197999">
    <property type="interactions" value="10"/>
</dbReference>
<dbReference type="CORUM" id="O88554"/>
<dbReference type="FunCoup" id="O88554">
    <property type="interactions" value="2903"/>
</dbReference>
<dbReference type="IntAct" id="O88554">
    <property type="interactions" value="1"/>
</dbReference>
<dbReference type="MINT" id="O88554"/>
<dbReference type="STRING" id="10090.ENSMUSP00000048877"/>
<dbReference type="BindingDB" id="O88554"/>
<dbReference type="ChEMBL" id="CHEMBL2794"/>
<dbReference type="iPTMnet" id="O88554"/>
<dbReference type="PhosphoSitePlus" id="O88554"/>
<dbReference type="PaxDb" id="10090-ENSMUSP00000048877"/>
<dbReference type="PeptideAtlas" id="O88554"/>
<dbReference type="ProteomicsDB" id="294329"/>
<dbReference type="Pumba" id="O88554"/>
<dbReference type="Antibodypedia" id="4794">
    <property type="antibodies" value="309 antibodies from 37 providers"/>
</dbReference>
<dbReference type="DNASU" id="11546"/>
<dbReference type="Ensembl" id="ENSMUST00000036126.7">
    <property type="protein sequence ID" value="ENSMUSP00000048877.6"/>
    <property type="gene ID" value="ENSMUSG00000036023.7"/>
</dbReference>
<dbReference type="GeneID" id="11546"/>
<dbReference type="KEGG" id="mmu:11546"/>
<dbReference type="UCSC" id="uc007tlq.1">
    <property type="organism name" value="mouse"/>
</dbReference>
<dbReference type="AGR" id="MGI:1341112"/>
<dbReference type="CTD" id="10038"/>
<dbReference type="MGI" id="MGI:1341112">
    <property type="gene designation" value="Parp2"/>
</dbReference>
<dbReference type="VEuPathDB" id="HostDB:ENSMUSG00000036023"/>
<dbReference type="eggNOG" id="KOG1037">
    <property type="taxonomic scope" value="Eukaryota"/>
</dbReference>
<dbReference type="GeneTree" id="ENSGT00940000158452"/>
<dbReference type="HOGENOM" id="CLU_004841_2_2_1"/>
<dbReference type="InParanoid" id="O88554"/>
<dbReference type="OMA" id="QGENDRF"/>
<dbReference type="OrthoDB" id="429950at2759"/>
<dbReference type="PhylomeDB" id="O88554"/>
<dbReference type="TreeFam" id="TF315407"/>
<dbReference type="Reactome" id="R-MMU-110362">
    <property type="pathway name" value="POLB-Dependent Long Patch Base Excision Repair"/>
</dbReference>
<dbReference type="Reactome" id="R-MMU-5685939">
    <property type="pathway name" value="HDR through MMEJ (alt-NHEJ)"/>
</dbReference>
<dbReference type="Reactome" id="R-MMU-5696394">
    <property type="pathway name" value="DNA Damage Recognition in GG-NER"/>
</dbReference>
<dbReference type="Reactome" id="R-MMU-5696395">
    <property type="pathway name" value="Formation of Incision Complex in GG-NER"/>
</dbReference>
<dbReference type="Reactome" id="R-MMU-5696400">
    <property type="pathway name" value="Dual Incision in GG-NER"/>
</dbReference>
<dbReference type="BioGRID-ORCS" id="11546">
    <property type="hits" value="4 hits in 116 CRISPR screens"/>
</dbReference>
<dbReference type="ChiTaRS" id="Parp2">
    <property type="organism name" value="mouse"/>
</dbReference>
<dbReference type="EvolutionaryTrace" id="O88554"/>
<dbReference type="PRO" id="PR:O88554"/>
<dbReference type="Proteomes" id="UP000000589">
    <property type="component" value="Chromosome 14"/>
</dbReference>
<dbReference type="RNAct" id="O88554">
    <property type="molecule type" value="protein"/>
</dbReference>
<dbReference type="Bgee" id="ENSMUSG00000036023">
    <property type="expression patterns" value="Expressed in embryonic post-anal tail and 268 other cell types or tissues"/>
</dbReference>
<dbReference type="ExpressionAtlas" id="O88554">
    <property type="expression patterns" value="baseline and differential"/>
</dbReference>
<dbReference type="GO" id="GO:0005829">
    <property type="term" value="C:cytosol"/>
    <property type="evidence" value="ECO:0007669"/>
    <property type="project" value="Ensembl"/>
</dbReference>
<dbReference type="GO" id="GO:0005730">
    <property type="term" value="C:nucleolus"/>
    <property type="evidence" value="ECO:0000314"/>
    <property type="project" value="MGI"/>
</dbReference>
<dbReference type="GO" id="GO:0005654">
    <property type="term" value="C:nucleoplasm"/>
    <property type="evidence" value="ECO:0000314"/>
    <property type="project" value="MGI"/>
</dbReference>
<dbReference type="GO" id="GO:0005634">
    <property type="term" value="C:nucleus"/>
    <property type="evidence" value="ECO:0000314"/>
    <property type="project" value="MGI"/>
</dbReference>
<dbReference type="GO" id="GO:0090734">
    <property type="term" value="C:site of DNA damage"/>
    <property type="evidence" value="ECO:0000250"/>
    <property type="project" value="UniProtKB"/>
</dbReference>
<dbReference type="GO" id="GO:0003682">
    <property type="term" value="F:chromatin binding"/>
    <property type="evidence" value="ECO:0000250"/>
    <property type="project" value="UniProtKB"/>
</dbReference>
<dbReference type="GO" id="GO:0003684">
    <property type="term" value="F:damaged DNA binding"/>
    <property type="evidence" value="ECO:0000250"/>
    <property type="project" value="UniProtKB"/>
</dbReference>
<dbReference type="GO" id="GO:0140294">
    <property type="term" value="F:NAD DNA ADP-ribosyltransferase activity"/>
    <property type="evidence" value="ECO:0000250"/>
    <property type="project" value="UniProtKB"/>
</dbReference>
<dbReference type="GO" id="GO:0003950">
    <property type="term" value="F:NAD+ poly-ADP-ribosyltransferase activity"/>
    <property type="evidence" value="ECO:0000314"/>
    <property type="project" value="MGI"/>
</dbReference>
<dbReference type="GO" id="GO:1990404">
    <property type="term" value="F:NAD+-protein mono-ADP-ribosyltransferase activity"/>
    <property type="evidence" value="ECO:0000250"/>
    <property type="project" value="UniProtKB"/>
</dbReference>
<dbReference type="GO" id="GO:0140806">
    <property type="term" value="F:NAD+-protein-aspartate ADP-ribosyltransferase activity"/>
    <property type="evidence" value="ECO:0000250"/>
    <property type="project" value="UniProtKB"/>
</dbReference>
<dbReference type="GO" id="GO:0140807">
    <property type="term" value="F:NAD+-protein-glutamate ADP-ribosyltransferase activity"/>
    <property type="evidence" value="ECO:0000250"/>
    <property type="project" value="UniProtKB"/>
</dbReference>
<dbReference type="GO" id="GO:0140805">
    <property type="term" value="F:NAD+-protein-serine ADP-ribosyltransferase activity"/>
    <property type="evidence" value="ECO:0000250"/>
    <property type="project" value="UniProtKB"/>
</dbReference>
<dbReference type="GO" id="GO:0031491">
    <property type="term" value="F:nucleosome binding"/>
    <property type="evidence" value="ECO:0000250"/>
    <property type="project" value="UniProtKB"/>
</dbReference>
<dbReference type="GO" id="GO:0016779">
    <property type="term" value="F:nucleotidyltransferase activity"/>
    <property type="evidence" value="ECO:0007669"/>
    <property type="project" value="UniProtKB-KW"/>
</dbReference>
<dbReference type="GO" id="GO:0072572">
    <property type="term" value="F:poly-ADP-D-ribose binding"/>
    <property type="evidence" value="ECO:0007669"/>
    <property type="project" value="Ensembl"/>
</dbReference>
<dbReference type="GO" id="GO:0160004">
    <property type="term" value="F:poly-ADP-D-ribose modification-dependent protein binding"/>
    <property type="evidence" value="ECO:0007669"/>
    <property type="project" value="Ensembl"/>
</dbReference>
<dbReference type="GO" id="GO:0006284">
    <property type="term" value="P:base-excision repair"/>
    <property type="evidence" value="ECO:0000315"/>
    <property type="project" value="MGI"/>
</dbReference>
<dbReference type="GO" id="GO:0046697">
    <property type="term" value="P:decidualization"/>
    <property type="evidence" value="ECO:0000315"/>
    <property type="project" value="UniProtKB"/>
</dbReference>
<dbReference type="GO" id="GO:0030592">
    <property type="term" value="P:DNA ADP-ribosylation"/>
    <property type="evidence" value="ECO:0000250"/>
    <property type="project" value="UniProtKB"/>
</dbReference>
<dbReference type="GO" id="GO:0006281">
    <property type="term" value="P:DNA repair"/>
    <property type="evidence" value="ECO:0000304"/>
    <property type="project" value="MGI"/>
</dbReference>
<dbReference type="GO" id="GO:0140861">
    <property type="term" value="P:DNA repair-dependent chromatin remodeling"/>
    <property type="evidence" value="ECO:0000250"/>
    <property type="project" value="UniProtKB"/>
</dbReference>
<dbReference type="GO" id="GO:0097191">
    <property type="term" value="P:extrinsic apoptotic signaling pathway"/>
    <property type="evidence" value="ECO:0000314"/>
    <property type="project" value="MGI"/>
</dbReference>
<dbReference type="GO" id="GO:0110088">
    <property type="term" value="P:hippocampal neuron apoptotic process"/>
    <property type="evidence" value="ECO:0007669"/>
    <property type="project" value="Ensembl"/>
</dbReference>
<dbReference type="GO" id="GO:0061051">
    <property type="term" value="P:positive regulation of cell growth involved in cardiac muscle cell development"/>
    <property type="evidence" value="ECO:0007669"/>
    <property type="project" value="Ensembl"/>
</dbReference>
<dbReference type="GO" id="GO:0070213">
    <property type="term" value="P:protein auto-ADP-ribosylation"/>
    <property type="evidence" value="ECO:0000250"/>
    <property type="project" value="UniProtKB"/>
</dbReference>
<dbReference type="GO" id="GO:0070212">
    <property type="term" value="P:protein poly-ADP-ribosylation"/>
    <property type="evidence" value="ECO:0000250"/>
    <property type="project" value="UniProtKB"/>
</dbReference>
<dbReference type="GO" id="GO:0090649">
    <property type="term" value="P:response to oxygen-glucose deprivation"/>
    <property type="evidence" value="ECO:0007669"/>
    <property type="project" value="Ensembl"/>
</dbReference>
<dbReference type="CDD" id="cd22252">
    <property type="entry name" value="PARP2_NTR"/>
    <property type="match status" value="1"/>
</dbReference>
<dbReference type="CDD" id="cd01437">
    <property type="entry name" value="parp_like"/>
    <property type="match status" value="1"/>
</dbReference>
<dbReference type="CDD" id="cd08003">
    <property type="entry name" value="WGR_PARP2_like"/>
    <property type="match status" value="1"/>
</dbReference>
<dbReference type="FunFam" id="1.20.142.10:FF:000003">
    <property type="entry name" value="Poly [ADP-ribose] polymerase"/>
    <property type="match status" value="1"/>
</dbReference>
<dbReference type="FunFam" id="2.20.140.10:FF:000001">
    <property type="entry name" value="Poly [ADP-ribose] polymerase"/>
    <property type="match status" value="1"/>
</dbReference>
<dbReference type="FunFam" id="3.90.228.10:FF:000002">
    <property type="entry name" value="Poly [ADP-ribose] polymerase"/>
    <property type="match status" value="1"/>
</dbReference>
<dbReference type="Gene3D" id="3.90.228.10">
    <property type="match status" value="1"/>
</dbReference>
<dbReference type="Gene3D" id="1.20.142.10">
    <property type="entry name" value="Poly(ADP-ribose) polymerase, regulatory domain"/>
    <property type="match status" value="1"/>
</dbReference>
<dbReference type="Gene3D" id="2.20.140.10">
    <property type="entry name" value="WGR domain"/>
    <property type="match status" value="1"/>
</dbReference>
<dbReference type="InterPro" id="IPR050800">
    <property type="entry name" value="ARTD/PARP"/>
</dbReference>
<dbReference type="InterPro" id="IPR012317">
    <property type="entry name" value="Poly(ADP-ribose)pol_cat_dom"/>
</dbReference>
<dbReference type="InterPro" id="IPR004102">
    <property type="entry name" value="Poly(ADP-ribose)pol_reg_dom"/>
</dbReference>
<dbReference type="InterPro" id="IPR036616">
    <property type="entry name" value="Poly(ADP-ribose)pol_reg_dom_sf"/>
</dbReference>
<dbReference type="InterPro" id="IPR036930">
    <property type="entry name" value="WGR_dom_sf"/>
</dbReference>
<dbReference type="InterPro" id="IPR008893">
    <property type="entry name" value="WGR_domain"/>
</dbReference>
<dbReference type="PANTHER" id="PTHR10459">
    <property type="entry name" value="DNA LIGASE"/>
    <property type="match status" value="1"/>
</dbReference>
<dbReference type="PANTHER" id="PTHR10459:SF60">
    <property type="entry name" value="POLY [ADP-RIBOSE] POLYMERASE 2"/>
    <property type="match status" value="1"/>
</dbReference>
<dbReference type="Pfam" id="PF00644">
    <property type="entry name" value="PARP"/>
    <property type="match status" value="1"/>
</dbReference>
<dbReference type="Pfam" id="PF02877">
    <property type="entry name" value="PARP_reg"/>
    <property type="match status" value="1"/>
</dbReference>
<dbReference type="Pfam" id="PF05406">
    <property type="entry name" value="WGR"/>
    <property type="match status" value="1"/>
</dbReference>
<dbReference type="SMART" id="SM00773">
    <property type="entry name" value="WGR"/>
    <property type="match status" value="1"/>
</dbReference>
<dbReference type="SUPFAM" id="SSF56399">
    <property type="entry name" value="ADP-ribosylation"/>
    <property type="match status" value="1"/>
</dbReference>
<dbReference type="SUPFAM" id="SSF47587">
    <property type="entry name" value="Domain of poly(ADP-ribose) polymerase"/>
    <property type="match status" value="1"/>
</dbReference>
<dbReference type="SUPFAM" id="SSF142921">
    <property type="entry name" value="WGR domain-like"/>
    <property type="match status" value="1"/>
</dbReference>
<dbReference type="PROSITE" id="PS51060">
    <property type="entry name" value="PARP_ALPHA_HD"/>
    <property type="match status" value="1"/>
</dbReference>
<dbReference type="PROSITE" id="PS51059">
    <property type="entry name" value="PARP_CATALYTIC"/>
    <property type="match status" value="1"/>
</dbReference>
<dbReference type="PROSITE" id="PS51977">
    <property type="entry name" value="WGR"/>
    <property type="match status" value="1"/>
</dbReference>
<protein>
    <recommendedName>
        <fullName>Poly [ADP-ribose] polymerase 2</fullName>
        <shortName>PARP-2</shortName>
        <shortName>mPARP-2</shortName>
        <ecNumber evidence="9">2.4.2.30</ecNumber>
    </recommendedName>
    <alternativeName>
        <fullName>ADP-ribosyltransferase diphtheria toxin-like 2</fullName>
        <shortName>ARTD2</shortName>
    </alternativeName>
    <alternativeName>
        <fullName evidence="14">DNA ADP-ribosyltransferase PARP2</fullName>
        <ecNumber evidence="1">2.4.2.-</ecNumber>
    </alternativeName>
    <alternativeName>
        <fullName>NAD(+) ADP-ribosyltransferase 2</fullName>
        <shortName>ADPRT-2</shortName>
    </alternativeName>
    <alternativeName>
        <fullName evidence="13">Poly[ADP-ribose] synthase 2</fullName>
        <shortName evidence="13">pADPRT-2</shortName>
    </alternativeName>
    <alternativeName>
        <fullName evidence="14">Protein poly-ADP-ribosyltransferase PARP2</fullName>
        <ecNumber evidence="1">2.4.2.-</ecNumber>
    </alternativeName>
</protein>
<evidence type="ECO:0000250" key="1">
    <source>
        <dbReference type="UniProtKB" id="Q9UGN5"/>
    </source>
</evidence>
<evidence type="ECO:0000255" key="2">
    <source>
        <dbReference type="PROSITE-ProRule" id="PRU00397"/>
    </source>
</evidence>
<evidence type="ECO:0000255" key="3">
    <source>
        <dbReference type="PROSITE-ProRule" id="PRU00398"/>
    </source>
</evidence>
<evidence type="ECO:0000255" key="4">
    <source>
        <dbReference type="PROSITE-ProRule" id="PRU01321"/>
    </source>
</evidence>
<evidence type="ECO:0000256" key="5">
    <source>
        <dbReference type="SAM" id="MobiDB-lite"/>
    </source>
</evidence>
<evidence type="ECO:0000269" key="6">
    <source>
    </source>
</evidence>
<evidence type="ECO:0000269" key="7">
    <source>
    </source>
</evidence>
<evidence type="ECO:0000269" key="8">
    <source>
    </source>
</evidence>
<evidence type="ECO:0000269" key="9">
    <source>
    </source>
</evidence>
<evidence type="ECO:0000269" key="10">
    <source>
    </source>
</evidence>
<evidence type="ECO:0000269" key="11">
    <source>
    </source>
</evidence>
<evidence type="ECO:0000269" key="12">
    <source>
    </source>
</evidence>
<evidence type="ECO:0000303" key="13">
    <source>
    </source>
</evidence>
<evidence type="ECO:0000305" key="14"/>
<evidence type="ECO:0007744" key="15">
    <source>
        <dbReference type="PDB" id="1GS0"/>
    </source>
</evidence>
<evidence type="ECO:0007829" key="16">
    <source>
        <dbReference type="PDB" id="1GS0"/>
    </source>
</evidence>
<feature type="chain" id="PRO_0000211328" description="Poly [ADP-ribose] polymerase 2">
    <location>
        <begin position="1"/>
        <end position="559"/>
    </location>
</feature>
<feature type="domain" description="WGR" evidence="4">
    <location>
        <begin position="84"/>
        <end position="181"/>
    </location>
</feature>
<feature type="domain" description="PARP alpha-helical" evidence="3">
    <location>
        <begin position="207"/>
        <end position="324"/>
    </location>
</feature>
<feature type="domain" description="PARP catalytic" evidence="2">
    <location>
        <begin position="332"/>
        <end position="559"/>
    </location>
</feature>
<feature type="region of interest" description="N-terminal region (NTR)" evidence="1">
    <location>
        <begin position="1"/>
        <end position="83"/>
    </location>
</feature>
<feature type="region of interest" description="Disordered" evidence="5">
    <location>
        <begin position="1"/>
        <end position="58"/>
    </location>
</feature>
<feature type="short sequence motif" description="Nuclear localization signal" evidence="1">
    <location>
        <begin position="19"/>
        <end position="20"/>
    </location>
</feature>
<feature type="short sequence motif" description="Nuclear localization signal" evidence="1">
    <location>
        <begin position="33"/>
        <end position="39"/>
    </location>
</feature>
<feature type="compositionally biased region" description="Basic and acidic residues" evidence="5">
    <location>
        <begin position="14"/>
        <end position="29"/>
    </location>
</feature>
<feature type="active site" description="For poly [ADP-ribose] polymerase activity" evidence="1">
    <location>
        <position position="534"/>
    </location>
</feature>
<feature type="binding site" evidence="1">
    <location>
        <begin position="404"/>
        <end position="406"/>
    </location>
    <ligand>
        <name>NAD(+)</name>
        <dbReference type="ChEBI" id="CHEBI:57540"/>
    </ligand>
</feature>
<feature type="binding site" evidence="1">
    <location>
        <position position="413"/>
    </location>
    <ligand>
        <name>NAD(+)</name>
        <dbReference type="ChEBI" id="CHEBI:57540"/>
    </ligand>
</feature>
<feature type="binding site" evidence="1">
    <location>
        <position position="420"/>
    </location>
    <ligand>
        <name>NAD(+)</name>
        <dbReference type="ChEBI" id="CHEBI:57540"/>
    </ligand>
</feature>
<feature type="binding site" evidence="1">
    <location>
        <position position="446"/>
    </location>
    <ligand>
        <name>NAD(+)</name>
        <dbReference type="ChEBI" id="CHEBI:57540"/>
    </ligand>
</feature>
<feature type="site" description="Cleavage; by caspase-8" evidence="9">
    <location>
        <begin position="187"/>
        <end position="188"/>
    </location>
</feature>
<feature type="modified residue" description="N6-(ADP-ribosyl)lysine; alternate" evidence="11">
    <location>
        <position position="36"/>
    </location>
</feature>
<feature type="modified residue" description="N6-acetyllysine; alternate" evidence="11">
    <location>
        <position position="36"/>
    </location>
</feature>
<feature type="modified residue" description="N6-(ADP-ribosyl)lysine; alternate" evidence="11">
    <location>
        <position position="37"/>
    </location>
</feature>
<feature type="modified residue" description="N6-acetyllysine; alternate" evidence="11">
    <location>
        <position position="37"/>
    </location>
</feature>
<feature type="modified residue" description="Phosphoserine" evidence="1">
    <location>
        <position position="208"/>
    </location>
</feature>
<feature type="mutagenesis site" description="Decreases levels of mono-ADP-ribosylation without loss of enzyme activity." evidence="11">
    <original>K</original>
    <variation>R</variation>
    <location>
        <position position="36"/>
    </location>
</feature>
<feature type="mutagenesis site" description="Decreases levels of mono-ADP-ribosylation without loss of enzyme activity." evidence="11">
    <original>K</original>
    <variation>R</variation>
    <location>
        <position position="37"/>
    </location>
</feature>
<feature type="mutagenesis site" description="Decreased cleavages by caspase-8 (CASP8)." evidence="9">
    <original>D</original>
    <variation>E</variation>
    <location>
        <position position="187"/>
    </location>
</feature>
<feature type="sequence conflict" description="In Ref. 2; AAK13253." evidence="14" ref="2">
    <original>L</original>
    <variation>V</variation>
    <location>
        <position position="82"/>
    </location>
</feature>
<feature type="sequence conflict" description="In Ref. 2; AAK13253." evidence="14" ref="2">
    <original>V</original>
    <variation>I</variation>
    <location>
        <position position="177"/>
    </location>
</feature>
<feature type="sequence conflict" description="In Ref. 2; AAK13253." evidence="14" ref="2">
    <original>R</original>
    <variation>Q</variation>
    <location>
        <position position="486"/>
    </location>
</feature>
<feature type="helix" evidence="16">
    <location>
        <begin position="212"/>
        <end position="222"/>
    </location>
</feature>
<feature type="helix" evidence="16">
    <location>
        <begin position="224"/>
        <end position="232"/>
    </location>
</feature>
<feature type="turn" evidence="16">
    <location>
        <begin position="233"/>
        <end position="235"/>
    </location>
</feature>
<feature type="strand" evidence="16">
    <location>
        <begin position="238"/>
        <end position="241"/>
    </location>
</feature>
<feature type="helix" evidence="16">
    <location>
        <begin position="243"/>
        <end position="245"/>
    </location>
</feature>
<feature type="helix" evidence="16">
    <location>
        <begin position="248"/>
        <end position="266"/>
    </location>
</feature>
<feature type="helix" evidence="16">
    <location>
        <begin position="272"/>
        <end position="284"/>
    </location>
</feature>
<feature type="helix" evidence="16">
    <location>
        <begin position="300"/>
        <end position="320"/>
    </location>
</feature>
<feature type="helix" evidence="16">
    <location>
        <begin position="333"/>
        <end position="340"/>
    </location>
</feature>
<feature type="strand" evidence="16">
    <location>
        <begin position="343"/>
        <end position="347"/>
    </location>
</feature>
<feature type="helix" evidence="16">
    <location>
        <begin position="353"/>
        <end position="364"/>
    </location>
</feature>
<feature type="strand" evidence="16">
    <location>
        <begin position="372"/>
        <end position="385"/>
    </location>
</feature>
<feature type="helix" evidence="16">
    <location>
        <begin position="388"/>
        <end position="391"/>
    </location>
</feature>
<feature type="strand" evidence="16">
    <location>
        <begin position="399"/>
        <end position="406"/>
    </location>
</feature>
<feature type="helix" evidence="16">
    <location>
        <begin position="408"/>
        <end position="410"/>
    </location>
</feature>
<feature type="helix" evidence="16">
    <location>
        <begin position="411"/>
        <end position="417"/>
    </location>
</feature>
<feature type="strand" evidence="16">
    <location>
        <begin position="424"/>
        <end position="426"/>
    </location>
</feature>
<feature type="helix" evidence="16">
    <location>
        <begin position="428"/>
        <end position="430"/>
    </location>
</feature>
<feature type="strand" evidence="16">
    <location>
        <begin position="434"/>
        <end position="441"/>
    </location>
</feature>
<feature type="helix" evidence="16">
    <location>
        <begin position="443"/>
        <end position="447"/>
    </location>
</feature>
<feature type="helix" evidence="16">
    <location>
        <begin position="448"/>
        <end position="450"/>
    </location>
</feature>
<feature type="strand" evidence="16">
    <location>
        <begin position="454"/>
        <end position="456"/>
    </location>
</feature>
<feature type="strand" evidence="16">
    <location>
        <begin position="458"/>
        <end position="467"/>
    </location>
</feature>
<feature type="strand" evidence="16">
    <location>
        <begin position="470"/>
        <end position="476"/>
    </location>
</feature>
<feature type="helix" evidence="16">
    <location>
        <begin position="481"/>
        <end position="484"/>
    </location>
</feature>
<feature type="strand" evidence="16">
    <location>
        <begin position="489"/>
        <end position="493"/>
    </location>
</feature>
<feature type="strand" evidence="16">
    <location>
        <begin position="496"/>
        <end position="498"/>
    </location>
</feature>
<feature type="helix" evidence="16">
    <location>
        <begin position="501"/>
        <end position="503"/>
    </location>
</feature>
<feature type="strand" evidence="16">
    <location>
        <begin position="505"/>
        <end position="507"/>
    </location>
</feature>
<feature type="strand" evidence="16">
    <location>
        <begin position="510"/>
        <end position="512"/>
    </location>
</feature>
<feature type="strand" evidence="16">
    <location>
        <begin position="525"/>
        <end position="527"/>
    </location>
</feature>
<feature type="strand" evidence="16">
    <location>
        <begin position="534"/>
        <end position="538"/>
    </location>
</feature>
<feature type="helix" evidence="16">
    <location>
        <begin position="540"/>
        <end position="542"/>
    </location>
</feature>
<feature type="strand" evidence="16">
    <location>
        <begin position="543"/>
        <end position="555"/>
    </location>
</feature>
<sequence length="559" mass="63397">MAPRRQRSGSGRRVLNEAKKVDNGNKATEDDSPPGKKMRTCQRKGPMAGGKDADRTKDNRDSVKTLLLKGKAPVDPECAAKLGKAHVYCEGDDVYDVMLNQTNLQFNNNKYYLIQLLEDDAQRNFSVWMRWGRVGKTGQHSLVTCSGDLNKAKEIFQKKFLDKTKNNWEDRENFEKVPGKYDMLQMDYAASTQDESKTKEEETLKPESQLDLRVQELLKLICNVQTMEEMMIEMKYDTKRAPLGKLTVAQIKAGYQSLKKIEDCIRAGQHGRALVEACNEFYTRIPHDFGLSIPPVIRTEKELSDKVKLLEALGDIEIALKLVKSERQGLEHPLDQHYRNLHCALRPLDHESNEFKVISQYLQSTHAPTHKDYTMTLLDVFEVEKEGEKEAFREDLPNRMLLWHGSRLSNWVGILSHGLRVAPPEAPITGYMFGKGIYFADMSSKSANYCFASRLKNTGLLLLSEVALGQCNELLEANPKAQGLLRGKHSTKGMGKMAPSPAHFITLNGSTVPLGPASDTGILNPEGYTLNYNEFIVYSPNQVRMRYLLKIQFNFLQLW</sequence>
<accession>O88554</accession>
<accession>Q99N29</accession>
<comment type="function">
    <text evidence="1 6 9">Poly-ADP-ribosyltransferase that mediates poly-ADP-ribosylation of proteins and plays a key role in DNA repair (PubMed:10364231, PubMed:12065591). Mediates glutamate, aspartate or serine ADP-ribosylation of proteins: the ADP-D-ribosyl group of NAD(+) is transferred to the acceptor carboxyl group of target residues and further ADP-ribosyl groups are transferred to the 2'-position of the terminal adenosine moiety, building up a polymer with an average chain length of 20-30 units (PubMed:12065591). Serine ADP-ribosylation of proteins constitutes the primary form of ADP-ribosylation of proteins in response to DNA damage (By similarity). Mediates glutamate and aspartate ADP-ribosylation of target proteins in absence of HPF1 (By similarity). Following interaction with HPF1, catalyzes serine ADP-ribosylation of target proteins; HPF1 conferring serine specificity by completing the PARP2 active site (By similarity). PARP2 initiates the repair of double-strand DNA breaks: recognizes and binds DNA breaks within chromatin and recruits HPF1, licensing serine ADP-ribosylation of target proteins, such as histones, thereby promoting decompaction of chromatin and the recruitment of repair factors leading to the reparation of DNA strand breaks (By similarity). HPF1 initiates serine ADP-ribosylation but restricts the polymerase activity of PARP2 in order to limit the length of poly-ADP-ribose chains (By similarity). Specifically mediates formation of branched poly-ADP-ribosylation (By similarity). Branched poly-ADP-ribose chains are specifically recognized by some factors, such as APLF (By similarity). In addition to proteins, also able to ADP-ribosylate DNA: preferentially acts on 5'-terminal phosphates at DNA strand breaks termini in nicked duplex (By similarity).</text>
</comment>
<comment type="catalytic activity">
    <reaction evidence="9">
        <text>NAD(+) + (ADP-D-ribosyl)n-acceptor = nicotinamide + (ADP-D-ribosyl)n+1-acceptor + H(+).</text>
        <dbReference type="EC" id="2.4.2.30"/>
    </reaction>
</comment>
<comment type="catalytic activity">
    <reaction evidence="1">
        <text>L-seryl-[protein] + NAD(+) = O-(ADP-D-ribosyl)-L-seryl-[protein] + nicotinamide + H(+)</text>
        <dbReference type="Rhea" id="RHEA:58232"/>
        <dbReference type="Rhea" id="RHEA-COMP:9863"/>
        <dbReference type="Rhea" id="RHEA-COMP:15091"/>
        <dbReference type="ChEBI" id="CHEBI:15378"/>
        <dbReference type="ChEBI" id="CHEBI:17154"/>
        <dbReference type="ChEBI" id="CHEBI:29999"/>
        <dbReference type="ChEBI" id="CHEBI:57540"/>
        <dbReference type="ChEBI" id="CHEBI:142556"/>
    </reaction>
</comment>
<comment type="catalytic activity">
    <reaction evidence="1">
        <text>L-aspartyl-[protein] + NAD(+) = 4-O-(ADP-D-ribosyl)-L-aspartyl-[protein] + nicotinamide</text>
        <dbReference type="Rhea" id="RHEA:54424"/>
        <dbReference type="Rhea" id="RHEA-COMP:9867"/>
        <dbReference type="Rhea" id="RHEA-COMP:13832"/>
        <dbReference type="ChEBI" id="CHEBI:17154"/>
        <dbReference type="ChEBI" id="CHEBI:29961"/>
        <dbReference type="ChEBI" id="CHEBI:57540"/>
        <dbReference type="ChEBI" id="CHEBI:138102"/>
    </reaction>
</comment>
<comment type="catalytic activity">
    <reaction evidence="1">
        <text>L-glutamyl-[protein] + NAD(+) = 5-O-(ADP-D-ribosyl)-L-glutamyl-[protein] + nicotinamide</text>
        <dbReference type="Rhea" id="RHEA:58224"/>
        <dbReference type="Rhea" id="RHEA-COMP:10208"/>
        <dbReference type="Rhea" id="RHEA-COMP:15089"/>
        <dbReference type="ChEBI" id="CHEBI:17154"/>
        <dbReference type="ChEBI" id="CHEBI:29973"/>
        <dbReference type="ChEBI" id="CHEBI:57540"/>
        <dbReference type="ChEBI" id="CHEBI:142540"/>
    </reaction>
</comment>
<comment type="activity regulation">
    <text evidence="1">ADP-ribosyltransferase activity is regulated via an allosteric activation mechanism. In absence of activation signal, PARP2 is autoinhibited by the PARP alpha-helical domain (also named HD region), which prevents effective NAD(+)-binding. Activity is highly stimulated by signals, which unfold the PARP alpha-helical domain, relieving autoinhibition. Poly-ADP-ribosyltransferase activity is tightly regulated and PARP2 is removed from damaged chromatin following initial poly-ADP-ribosylation of chromatin to avoid prolonged residence (trapping) that has cytotoxic consequences. CHD1L promotes PARP2 removal from chromatin.</text>
</comment>
<comment type="subunit">
    <text evidence="1 8">Component of a base excision repair (BER) complex, containing at least XRCC1, PARP1, POLB and LRIG3 (PubMed:11948190). Homo- and heterodimer with PARP1 (By similarity). Interacts (via the PARP catalytic domain) with HPF1 (By similarity). Interacts with core nucleosomes.</text>
</comment>
<comment type="subcellular location">
    <subcellularLocation>
        <location evidence="6">Nucleus</location>
    </subcellularLocation>
    <subcellularLocation>
        <location evidence="1">Chromosome</location>
    </subcellularLocation>
    <text evidence="1">Recruited to DNA damage sites in a PARP1-dependent process: recognizes and binds poly-ADP-ribose chains produced by PARP1 at DNA damage sites via its N-terminus, leading to its recruitment.</text>
</comment>
<comment type="tissue specificity">
    <text evidence="7 8">Widely expressed; the highest levels were in testis followed by ovary (PubMed:11133988). Expression is correlated with proliferation, with higher levels occurring during early fetal development and organogenesis and in the highly proliferative cell compartments of adult (PubMed:11948190).</text>
</comment>
<comment type="developmental stage">
    <text evidence="8">At stage 12.5 dpc, expressed at high level in the developing liver and kidneys (PubMed:11948190). At 18.5 dpc, preferentially expressed in the thymus and in regions of the nervous system (PubMed:11948190). Within the developing trunk, preferential expression persisted in the liver and became restricted to the cortical region of the kidney, spleen, adrenal gland, and to stomach and intestinal epithelia (PubMed:11948190). From 14.5 dpc to 18.5 dpc, as well as in the adult, expressed at the highest level in thymus (PubMed:11948190). Expression is particularly high in the subcapsular zone of the thymus where immature lymphocytes proliferate (PubMed:11948190).</text>
</comment>
<comment type="induction">
    <text evidence="6">By high levels of DNA-damaging agents.</text>
</comment>
<comment type="domain">
    <text evidence="1">The N-terminal region (NTR) recognizes and binds poly-ADP-ribose chains produced by PARP1, leading to its recruitment to DNA damage sites.</text>
</comment>
<comment type="domain">
    <text evidence="1">The N-terminal disordered region does not act as a key DNA-binding domain. The WGR and PARP catalytic domains function together to recruit PARP2 to sites of DNA breaks. The N-terminal disordered region is only required for activation on specific types of DNA damage.</text>
</comment>
<comment type="domain">
    <text evidence="1">The WGR domain bridges two nucleosomes, with the broken DNA aligned in a position suitable for ligation. The bridging induces structural changes in PARP2 that signal the recognition of a DNA break to the catalytic domain of PARP2, promoting HPF1 recruitment and subsequent activation of PARP2, licensing serine ADP-ribosylation of target proteins.</text>
</comment>
<comment type="domain">
    <text evidence="1">The PARP alpha-helical domain (also named HD region) prevents effective NAD(+)-binding in absence of activation signal. Binding to damaged DNA unfolds the PARP alpha-helical domain, relieving autoinhibition.</text>
</comment>
<comment type="PTM">
    <text evidence="1 8">Auto poly-ADP-ribosylated on serine residues, leading to dissociation of the PARP2-HPF1 complex from chromatin (By similarity). Poly-ADP-ribosylated by PARP1 (PubMed:11948190).</text>
</comment>
<comment type="PTM">
    <text evidence="11">Acetylation reduces DNA binding and enzymatic activity.</text>
</comment>
<comment type="PTM">
    <text evidence="9">Proteolytically cleaved by caspase-8 (CASP8) in response to apoptosis, leading to its inactivation.</text>
</comment>
<comment type="disruption phenotype">
    <text evidence="10 12">No visible phenotype in normal conditions, but mutant mice are sensitive to ionizing radiation (PubMed:12727891). Following alkylating agent treatment, cells show increased post-replicative genomic instability, G2/M accumulation and chromosome missegregation accompanying kinetochore defects (PubMed:12727891). Mice lacking both Parp1 and Parp2 are not viable and die at the onset of gastrulation (PubMed:12727891). Female mice lacking both Parp1 and Parp2 in the uterus display infertility; defects are caused by decidualization failure and pregnancy loss (PubMed:34580230).</text>
</comment>
<comment type="similarity">
    <text evidence="14">Belongs to the ARTD/PARP family.</text>
</comment>
<comment type="sequence caution" evidence="14">
    <conflict type="erroneous initiation">
        <sequence resource="EMBL-CDS" id="AAC25415"/>
    </conflict>
</comment>
<gene>
    <name type="primary">Parp2</name>
    <name type="synonym">Adprt2</name>
    <name type="synonym">Adprtl2</name>
    <name type="synonym">Aspartl2</name>
</gene>
<organism>
    <name type="scientific">Mus musculus</name>
    <name type="common">Mouse</name>
    <dbReference type="NCBI Taxonomy" id="10090"/>
    <lineage>
        <taxon>Eukaryota</taxon>
        <taxon>Metazoa</taxon>
        <taxon>Chordata</taxon>
        <taxon>Craniata</taxon>
        <taxon>Vertebrata</taxon>
        <taxon>Euteleostomi</taxon>
        <taxon>Mammalia</taxon>
        <taxon>Eutheria</taxon>
        <taxon>Euarchontoglires</taxon>
        <taxon>Glires</taxon>
        <taxon>Rodentia</taxon>
        <taxon>Myomorpha</taxon>
        <taxon>Muroidea</taxon>
        <taxon>Muridae</taxon>
        <taxon>Murinae</taxon>
        <taxon>Mus</taxon>
        <taxon>Mus</taxon>
    </lineage>
</organism>
<keyword id="KW-0002">3D-structure</keyword>
<keyword id="KW-0007">Acetylation</keyword>
<keyword id="KW-0013">ADP-ribosylation</keyword>
<keyword id="KW-0021">Allosteric enzyme</keyword>
<keyword id="KW-0158">Chromosome</keyword>
<keyword id="KW-0227">DNA damage</keyword>
<keyword id="KW-0234">DNA repair</keyword>
<keyword id="KW-0238">DNA-binding</keyword>
<keyword id="KW-0328">Glycosyltransferase</keyword>
<keyword id="KW-0520">NAD</keyword>
<keyword id="KW-0548">Nucleotidyltransferase</keyword>
<keyword id="KW-0539">Nucleus</keyword>
<keyword id="KW-0597">Phosphoprotein</keyword>
<keyword id="KW-1185">Reference proteome</keyword>
<keyword id="KW-0808">Transferase</keyword>
<name>PARP2_MOUSE</name>
<proteinExistence type="evidence at protein level"/>